<dbReference type="EC" id="2.7.6.1" evidence="1"/>
<dbReference type="EMBL" id="AE009439">
    <property type="protein sequence ID" value="AAM02880.1"/>
    <property type="molecule type" value="Genomic_DNA"/>
</dbReference>
<dbReference type="RefSeq" id="WP_011020035.1">
    <property type="nucleotide sequence ID" value="NC_003551.1"/>
</dbReference>
<dbReference type="SMR" id="Q8TUT6"/>
<dbReference type="FunCoup" id="Q8TUT6">
    <property type="interactions" value="191"/>
</dbReference>
<dbReference type="STRING" id="190192.MK1667"/>
<dbReference type="PaxDb" id="190192-MK1667"/>
<dbReference type="EnsemblBacteria" id="AAM02880">
    <property type="protein sequence ID" value="AAM02880"/>
    <property type="gene ID" value="MK1667"/>
</dbReference>
<dbReference type="GeneID" id="1478262"/>
<dbReference type="KEGG" id="mka:MK1667"/>
<dbReference type="PATRIC" id="fig|190192.8.peg.1831"/>
<dbReference type="HOGENOM" id="CLU_033546_2_2_2"/>
<dbReference type="InParanoid" id="Q8TUT6"/>
<dbReference type="OrthoDB" id="371997at2157"/>
<dbReference type="UniPathway" id="UPA00087">
    <property type="reaction ID" value="UER00172"/>
</dbReference>
<dbReference type="Proteomes" id="UP000001826">
    <property type="component" value="Chromosome"/>
</dbReference>
<dbReference type="GO" id="GO:0005737">
    <property type="term" value="C:cytoplasm"/>
    <property type="evidence" value="ECO:0007669"/>
    <property type="project" value="UniProtKB-SubCell"/>
</dbReference>
<dbReference type="GO" id="GO:0002189">
    <property type="term" value="C:ribose phosphate diphosphokinase complex"/>
    <property type="evidence" value="ECO:0007669"/>
    <property type="project" value="TreeGrafter"/>
</dbReference>
<dbReference type="GO" id="GO:0005524">
    <property type="term" value="F:ATP binding"/>
    <property type="evidence" value="ECO:0007669"/>
    <property type="project" value="UniProtKB-KW"/>
</dbReference>
<dbReference type="GO" id="GO:0016301">
    <property type="term" value="F:kinase activity"/>
    <property type="evidence" value="ECO:0007669"/>
    <property type="project" value="UniProtKB-KW"/>
</dbReference>
<dbReference type="GO" id="GO:0000287">
    <property type="term" value="F:magnesium ion binding"/>
    <property type="evidence" value="ECO:0007669"/>
    <property type="project" value="UniProtKB-UniRule"/>
</dbReference>
<dbReference type="GO" id="GO:0004749">
    <property type="term" value="F:ribose phosphate diphosphokinase activity"/>
    <property type="evidence" value="ECO:0007669"/>
    <property type="project" value="UniProtKB-UniRule"/>
</dbReference>
<dbReference type="GO" id="GO:0006015">
    <property type="term" value="P:5-phosphoribose 1-diphosphate biosynthetic process"/>
    <property type="evidence" value="ECO:0007669"/>
    <property type="project" value="UniProtKB-UniRule"/>
</dbReference>
<dbReference type="GO" id="GO:0006164">
    <property type="term" value="P:purine nucleotide biosynthetic process"/>
    <property type="evidence" value="ECO:0007669"/>
    <property type="project" value="TreeGrafter"/>
</dbReference>
<dbReference type="CDD" id="cd06223">
    <property type="entry name" value="PRTases_typeI"/>
    <property type="match status" value="1"/>
</dbReference>
<dbReference type="FunFam" id="3.40.50.2020:FF:000007">
    <property type="entry name" value="Ribose-phosphate pyrophosphokinase"/>
    <property type="match status" value="1"/>
</dbReference>
<dbReference type="Gene3D" id="3.40.50.2020">
    <property type="match status" value="2"/>
</dbReference>
<dbReference type="HAMAP" id="MF_00583_A">
    <property type="entry name" value="RibP_PPkinase_A"/>
    <property type="match status" value="1"/>
</dbReference>
<dbReference type="InterPro" id="IPR029099">
    <property type="entry name" value="Pribosyltran_N"/>
</dbReference>
<dbReference type="InterPro" id="IPR000836">
    <property type="entry name" value="PRibTrfase_dom"/>
</dbReference>
<dbReference type="InterPro" id="IPR029057">
    <property type="entry name" value="PRTase-like"/>
</dbReference>
<dbReference type="InterPro" id="IPR005946">
    <property type="entry name" value="Rib-P_diPkinase"/>
</dbReference>
<dbReference type="InterPro" id="IPR037514">
    <property type="entry name" value="Rib-P_diPkinase_arc"/>
</dbReference>
<dbReference type="NCBIfam" id="NF002095">
    <property type="entry name" value="PRK00934.1"/>
    <property type="match status" value="1"/>
</dbReference>
<dbReference type="NCBIfam" id="TIGR01251">
    <property type="entry name" value="ribP_PPkin"/>
    <property type="match status" value="1"/>
</dbReference>
<dbReference type="PANTHER" id="PTHR10210">
    <property type="entry name" value="RIBOSE-PHOSPHATE DIPHOSPHOKINASE FAMILY MEMBER"/>
    <property type="match status" value="1"/>
</dbReference>
<dbReference type="PANTHER" id="PTHR10210:SF32">
    <property type="entry name" value="RIBOSE-PHOSPHATE PYROPHOSPHOKINASE 2"/>
    <property type="match status" value="1"/>
</dbReference>
<dbReference type="Pfam" id="PF00156">
    <property type="entry name" value="Pribosyltran"/>
    <property type="match status" value="1"/>
</dbReference>
<dbReference type="Pfam" id="PF13793">
    <property type="entry name" value="Pribosyltran_N"/>
    <property type="match status" value="1"/>
</dbReference>
<dbReference type="SMART" id="SM01400">
    <property type="entry name" value="Pribosyltran_N"/>
    <property type="match status" value="1"/>
</dbReference>
<dbReference type="SUPFAM" id="SSF53271">
    <property type="entry name" value="PRTase-like"/>
    <property type="match status" value="1"/>
</dbReference>
<organism>
    <name type="scientific">Methanopyrus kandleri (strain AV19 / DSM 6324 / JCM 9639 / NBRC 100938)</name>
    <dbReference type="NCBI Taxonomy" id="190192"/>
    <lineage>
        <taxon>Archaea</taxon>
        <taxon>Methanobacteriati</taxon>
        <taxon>Methanobacteriota</taxon>
        <taxon>Methanomada group</taxon>
        <taxon>Methanopyri</taxon>
        <taxon>Methanopyrales</taxon>
        <taxon>Methanopyraceae</taxon>
        <taxon>Methanopyrus</taxon>
    </lineage>
</organism>
<evidence type="ECO:0000255" key="1">
    <source>
        <dbReference type="HAMAP-Rule" id="MF_00583"/>
    </source>
</evidence>
<reference key="1">
    <citation type="journal article" date="2002" name="Proc. Natl. Acad. Sci. U.S.A.">
        <title>The complete genome of hyperthermophile Methanopyrus kandleri AV19 and monophyly of archaeal methanogens.</title>
        <authorList>
            <person name="Slesarev A.I."/>
            <person name="Mezhevaya K.V."/>
            <person name="Makarova K.S."/>
            <person name="Polushin N.N."/>
            <person name="Shcherbinina O.V."/>
            <person name="Shakhova V.V."/>
            <person name="Belova G.I."/>
            <person name="Aravind L."/>
            <person name="Natale D.A."/>
            <person name="Rogozin I.B."/>
            <person name="Tatusov R.L."/>
            <person name="Wolf Y.I."/>
            <person name="Stetter K.O."/>
            <person name="Malykh A.G."/>
            <person name="Koonin E.V."/>
            <person name="Kozyavkin S.A."/>
        </authorList>
    </citation>
    <scope>NUCLEOTIDE SEQUENCE [LARGE SCALE GENOMIC DNA]</scope>
    <source>
        <strain>AV19 / DSM 6324 / JCM 9639 / NBRC 100938</strain>
    </source>
</reference>
<protein>
    <recommendedName>
        <fullName evidence="1">Ribose-phosphate pyrophosphokinase</fullName>
        <shortName evidence="1">RPPK</shortName>
        <ecNumber evidence="1">2.7.6.1</ecNumber>
    </recommendedName>
    <alternativeName>
        <fullName evidence="1">5-phospho-D-ribosyl alpha-1-diphosphate synthase</fullName>
    </alternativeName>
    <alternativeName>
        <fullName evidence="1">Phosphoribosyl diphosphate synthase</fullName>
    </alternativeName>
    <alternativeName>
        <fullName evidence="1">Phosphoribosyl pyrophosphate synthase</fullName>
        <shortName evidence="1">P-Rib-PP synthase</shortName>
        <shortName evidence="1">PRPP synthase</shortName>
        <shortName evidence="1">PRPPase</shortName>
    </alternativeName>
</protein>
<accession>Q8TUT6</accession>
<sequence>MIVLATSEGVKLGRRLAEELDAELAPVEEDRFPDGEQIVRVPPELDGTVVVVHSMSPPQDENLVKAIITLDAARENGAEEVIAIVPYMAYSRQDRRFEPGEPVSFRAVARAVSANADALITVDLHEPGTLKYFDVPAENVSAAEELGKYLAERFEGEDLVVIGPDEGARELAREVASICGVEYDHLEKKRLSGDEVEIHPKELDVEGRTVVLVDDMIDTGGTMVEAARALRDQGAGTLYAACTHALLTRNAATRLLASGFEDIIATDTVPNPFEKVSVAPPVAEAVENLSG</sequence>
<name>KPRS_METKA</name>
<feature type="chain" id="PRO_0000141239" description="Ribose-phosphate pyrophosphokinase">
    <location>
        <begin position="1"/>
        <end position="291"/>
    </location>
</feature>
<feature type="active site" evidence="1">
    <location>
        <position position="188"/>
    </location>
</feature>
<feature type="binding site" evidence="1">
    <location>
        <begin position="34"/>
        <end position="36"/>
    </location>
    <ligand>
        <name>ATP</name>
        <dbReference type="ChEBI" id="CHEBI:30616"/>
    </ligand>
</feature>
<feature type="binding site" evidence="1">
    <location>
        <begin position="92"/>
        <end position="93"/>
    </location>
    <ligand>
        <name>ATP</name>
        <dbReference type="ChEBI" id="CHEBI:30616"/>
    </ligand>
</feature>
<feature type="binding site" evidence="1">
    <location>
        <position position="125"/>
    </location>
    <ligand>
        <name>Mg(2+)</name>
        <dbReference type="ChEBI" id="CHEBI:18420"/>
        <label>1</label>
    </ligand>
</feature>
<feature type="binding site" evidence="1">
    <location>
        <position position="165"/>
    </location>
    <ligand>
        <name>Mg(2+)</name>
        <dbReference type="ChEBI" id="CHEBI:18420"/>
        <label>2</label>
    </ligand>
</feature>
<feature type="binding site" evidence="1">
    <location>
        <position position="190"/>
    </location>
    <ligand>
        <name>D-ribose 5-phosphate</name>
        <dbReference type="ChEBI" id="CHEBI:78346"/>
    </ligand>
</feature>
<feature type="binding site" evidence="1">
    <location>
        <position position="214"/>
    </location>
    <ligand>
        <name>D-ribose 5-phosphate</name>
        <dbReference type="ChEBI" id="CHEBI:78346"/>
    </ligand>
</feature>
<proteinExistence type="inferred from homology"/>
<keyword id="KW-0067">ATP-binding</keyword>
<keyword id="KW-0963">Cytoplasm</keyword>
<keyword id="KW-0418">Kinase</keyword>
<keyword id="KW-0460">Magnesium</keyword>
<keyword id="KW-0479">Metal-binding</keyword>
<keyword id="KW-0545">Nucleotide biosynthesis</keyword>
<keyword id="KW-0547">Nucleotide-binding</keyword>
<keyword id="KW-1185">Reference proteome</keyword>
<keyword id="KW-0808">Transferase</keyword>
<comment type="function">
    <text evidence="1">Involved in the biosynthesis of the central metabolite phospho-alpha-D-ribosyl-1-pyrophosphate (PRPP) via the transfer of pyrophosphoryl group from ATP to 1-hydroxyl of ribose-5-phosphate (Rib-5-P).</text>
</comment>
<comment type="catalytic activity">
    <reaction evidence="1">
        <text>D-ribose 5-phosphate + ATP = 5-phospho-alpha-D-ribose 1-diphosphate + AMP + H(+)</text>
        <dbReference type="Rhea" id="RHEA:15609"/>
        <dbReference type="ChEBI" id="CHEBI:15378"/>
        <dbReference type="ChEBI" id="CHEBI:30616"/>
        <dbReference type="ChEBI" id="CHEBI:58017"/>
        <dbReference type="ChEBI" id="CHEBI:78346"/>
        <dbReference type="ChEBI" id="CHEBI:456215"/>
        <dbReference type="EC" id="2.7.6.1"/>
    </reaction>
</comment>
<comment type="cofactor">
    <cofactor evidence="1">
        <name>Mg(2+)</name>
        <dbReference type="ChEBI" id="CHEBI:18420"/>
    </cofactor>
    <text evidence="1">Binds 2 Mg(2+) ions per subunit.</text>
</comment>
<comment type="pathway">
    <text evidence="1">Metabolic intermediate biosynthesis; 5-phospho-alpha-D-ribose 1-diphosphate biosynthesis; 5-phospho-alpha-D-ribose 1-diphosphate from D-ribose 5-phosphate (route I): step 1/1.</text>
</comment>
<comment type="subcellular location">
    <subcellularLocation>
        <location evidence="1">Cytoplasm</location>
    </subcellularLocation>
</comment>
<comment type="similarity">
    <text evidence="1">Belongs to the ribose-phosphate pyrophosphokinase family. Class III (archaeal) subfamily.</text>
</comment>
<gene>
    <name evidence="1" type="primary">prs</name>
    <name type="synonym">prsA</name>
    <name type="ordered locus">MK1667</name>
</gene>